<feature type="chain" id="PRO_1000054437" description="Large ribosomal subunit protein uL15">
    <location>
        <begin position="1"/>
        <end position="144"/>
    </location>
</feature>
<feature type="region of interest" description="Disordered" evidence="2">
    <location>
        <begin position="1"/>
        <end position="56"/>
    </location>
</feature>
<feature type="compositionally biased region" description="Gly residues" evidence="2">
    <location>
        <begin position="21"/>
        <end position="31"/>
    </location>
</feature>
<accession>A3MRX3</accession>
<organism>
    <name type="scientific">Burkholderia mallei (strain NCTC 10247)</name>
    <dbReference type="NCBI Taxonomy" id="320389"/>
    <lineage>
        <taxon>Bacteria</taxon>
        <taxon>Pseudomonadati</taxon>
        <taxon>Pseudomonadota</taxon>
        <taxon>Betaproteobacteria</taxon>
        <taxon>Burkholderiales</taxon>
        <taxon>Burkholderiaceae</taxon>
        <taxon>Burkholderia</taxon>
        <taxon>pseudomallei group</taxon>
    </lineage>
</organism>
<evidence type="ECO:0000255" key="1">
    <source>
        <dbReference type="HAMAP-Rule" id="MF_01341"/>
    </source>
</evidence>
<evidence type="ECO:0000256" key="2">
    <source>
        <dbReference type="SAM" id="MobiDB-lite"/>
    </source>
</evidence>
<evidence type="ECO:0000305" key="3"/>
<proteinExistence type="inferred from homology"/>
<comment type="function">
    <text evidence="1">Binds to the 23S rRNA.</text>
</comment>
<comment type="subunit">
    <text evidence="1">Part of the 50S ribosomal subunit.</text>
</comment>
<comment type="similarity">
    <text evidence="1">Belongs to the universal ribosomal protein uL15 family.</text>
</comment>
<reference key="1">
    <citation type="journal article" date="2010" name="Genome Biol. Evol.">
        <title>Continuing evolution of Burkholderia mallei through genome reduction and large-scale rearrangements.</title>
        <authorList>
            <person name="Losada L."/>
            <person name="Ronning C.M."/>
            <person name="DeShazer D."/>
            <person name="Woods D."/>
            <person name="Fedorova N."/>
            <person name="Kim H.S."/>
            <person name="Shabalina S.A."/>
            <person name="Pearson T.R."/>
            <person name="Brinkac L."/>
            <person name="Tan P."/>
            <person name="Nandi T."/>
            <person name="Crabtree J."/>
            <person name="Badger J."/>
            <person name="Beckstrom-Sternberg S."/>
            <person name="Saqib M."/>
            <person name="Schutzer S.E."/>
            <person name="Keim P."/>
            <person name="Nierman W.C."/>
        </authorList>
    </citation>
    <scope>NUCLEOTIDE SEQUENCE [LARGE SCALE GENOMIC DNA]</scope>
    <source>
        <strain>NCTC 10247</strain>
    </source>
</reference>
<protein>
    <recommendedName>
        <fullName evidence="1">Large ribosomal subunit protein uL15</fullName>
    </recommendedName>
    <alternativeName>
        <fullName evidence="3">50S ribosomal protein L15</fullName>
    </alternativeName>
</protein>
<gene>
    <name evidence="1" type="primary">rplO</name>
    <name type="ordered locus">BMA10247_3497</name>
</gene>
<dbReference type="EMBL" id="CP000548">
    <property type="protein sequence ID" value="ABO07086.1"/>
    <property type="molecule type" value="Genomic_DNA"/>
</dbReference>
<dbReference type="RefSeq" id="WP_004197941.1">
    <property type="nucleotide sequence ID" value="NZ_CP007802.1"/>
</dbReference>
<dbReference type="SMR" id="A3MRX3"/>
<dbReference type="GeneID" id="92980300"/>
<dbReference type="KEGG" id="bmaz:BM44_3022"/>
<dbReference type="KEGG" id="bmn:BMA10247_3497"/>
<dbReference type="PATRIC" id="fig|320389.8.peg.3394"/>
<dbReference type="GO" id="GO:0022625">
    <property type="term" value="C:cytosolic large ribosomal subunit"/>
    <property type="evidence" value="ECO:0007669"/>
    <property type="project" value="TreeGrafter"/>
</dbReference>
<dbReference type="GO" id="GO:0019843">
    <property type="term" value="F:rRNA binding"/>
    <property type="evidence" value="ECO:0007669"/>
    <property type="project" value="UniProtKB-UniRule"/>
</dbReference>
<dbReference type="GO" id="GO:0003735">
    <property type="term" value="F:structural constituent of ribosome"/>
    <property type="evidence" value="ECO:0007669"/>
    <property type="project" value="InterPro"/>
</dbReference>
<dbReference type="GO" id="GO:0006412">
    <property type="term" value="P:translation"/>
    <property type="evidence" value="ECO:0007669"/>
    <property type="project" value="UniProtKB-UniRule"/>
</dbReference>
<dbReference type="Gene3D" id="3.100.10.10">
    <property type="match status" value="1"/>
</dbReference>
<dbReference type="HAMAP" id="MF_01341">
    <property type="entry name" value="Ribosomal_uL15"/>
    <property type="match status" value="1"/>
</dbReference>
<dbReference type="InterPro" id="IPR030878">
    <property type="entry name" value="Ribosomal_uL15"/>
</dbReference>
<dbReference type="InterPro" id="IPR021131">
    <property type="entry name" value="Ribosomal_uL15/eL18"/>
</dbReference>
<dbReference type="InterPro" id="IPR036227">
    <property type="entry name" value="Ribosomal_uL15/eL18_sf"/>
</dbReference>
<dbReference type="InterPro" id="IPR005749">
    <property type="entry name" value="Ribosomal_uL15_bac-type"/>
</dbReference>
<dbReference type="InterPro" id="IPR001196">
    <property type="entry name" value="Ribosomal_uL15_CS"/>
</dbReference>
<dbReference type="NCBIfam" id="TIGR01071">
    <property type="entry name" value="rplO_bact"/>
    <property type="match status" value="1"/>
</dbReference>
<dbReference type="PANTHER" id="PTHR12934">
    <property type="entry name" value="50S RIBOSOMAL PROTEIN L15"/>
    <property type="match status" value="1"/>
</dbReference>
<dbReference type="PANTHER" id="PTHR12934:SF11">
    <property type="entry name" value="LARGE RIBOSOMAL SUBUNIT PROTEIN UL15M"/>
    <property type="match status" value="1"/>
</dbReference>
<dbReference type="Pfam" id="PF00828">
    <property type="entry name" value="Ribosomal_L27A"/>
    <property type="match status" value="1"/>
</dbReference>
<dbReference type="SUPFAM" id="SSF52080">
    <property type="entry name" value="Ribosomal proteins L15p and L18e"/>
    <property type="match status" value="1"/>
</dbReference>
<dbReference type="PROSITE" id="PS00475">
    <property type="entry name" value="RIBOSOMAL_L15"/>
    <property type="match status" value="1"/>
</dbReference>
<keyword id="KW-0687">Ribonucleoprotein</keyword>
<keyword id="KW-0689">Ribosomal protein</keyword>
<keyword id="KW-0694">RNA-binding</keyword>
<keyword id="KW-0699">rRNA-binding</keyword>
<sequence length="144" mass="15136">MELNNLKPAEGAKHAKRRVGRGIGSGLGKTAGRGHKGQKSRSGGFHKVGFEGGQMPLQRRLPKRGFTSLTKEFVGEVRLGDLEKLPVDEIDLLALKQAGLVGELIKSAKIIATGELKRKIVVKGLGATKGARAAIEAAGGSFAE</sequence>
<name>RL15_BURM7</name>